<protein>
    <recommendedName>
        <fullName evidence="1">Putative double-stranded DNA mimic protein YciU</fullName>
    </recommendedName>
</protein>
<name>YCIU_ECOSE</name>
<feature type="chain" id="PRO_1000131706" description="Putative double-stranded DNA mimic protein YciU">
    <location>
        <begin position="1"/>
        <end position="109"/>
    </location>
</feature>
<accession>B6I9W1</accession>
<organism>
    <name type="scientific">Escherichia coli (strain SE11)</name>
    <dbReference type="NCBI Taxonomy" id="409438"/>
    <lineage>
        <taxon>Bacteria</taxon>
        <taxon>Pseudomonadati</taxon>
        <taxon>Pseudomonadota</taxon>
        <taxon>Gammaproteobacteria</taxon>
        <taxon>Enterobacterales</taxon>
        <taxon>Enterobacteriaceae</taxon>
        <taxon>Escherichia</taxon>
    </lineage>
</organism>
<sequence length="109" mass="12687">MDMDLNNRLTEDETLEQAYDIFLELAADNLDPADVLLFNLQFEERGGAELFDPAEDWQEHVDFDLNPDFFAEVVIGLADSEDGEINDVFARILLCREKDHKLCHIIWRE</sequence>
<dbReference type="EMBL" id="AP009240">
    <property type="protein sequence ID" value="BAG76820.1"/>
    <property type="molecule type" value="Genomic_DNA"/>
</dbReference>
<dbReference type="RefSeq" id="WP_000366959.1">
    <property type="nucleotide sequence ID" value="NC_011415.1"/>
</dbReference>
<dbReference type="SMR" id="B6I9W1"/>
<dbReference type="KEGG" id="ecy:ECSE_1296"/>
<dbReference type="HOGENOM" id="CLU_143392_0_0_6"/>
<dbReference type="Proteomes" id="UP000008199">
    <property type="component" value="Chromosome"/>
</dbReference>
<dbReference type="Gene3D" id="3.10.450.140">
    <property type="entry name" value="dsDNA mimic, putative"/>
    <property type="match status" value="1"/>
</dbReference>
<dbReference type="HAMAP" id="MF_00680">
    <property type="entry name" value="Put_dsDNA_mimic"/>
    <property type="match status" value="1"/>
</dbReference>
<dbReference type="InterPro" id="IPR007376">
    <property type="entry name" value="dsDNA_mimic_put"/>
</dbReference>
<dbReference type="InterPro" id="IPR036763">
    <property type="entry name" value="Put_dsDNA_mimic_sf"/>
</dbReference>
<dbReference type="NCBIfam" id="NF003469">
    <property type="entry name" value="PRK05094.1"/>
    <property type="match status" value="1"/>
</dbReference>
<dbReference type="Pfam" id="PF04269">
    <property type="entry name" value="DUF440"/>
    <property type="match status" value="1"/>
</dbReference>
<dbReference type="PIRSF" id="PIRSF004916">
    <property type="entry name" value="UCP004916"/>
    <property type="match status" value="1"/>
</dbReference>
<dbReference type="SUPFAM" id="SSF102816">
    <property type="entry name" value="Putative dsDNA mimic"/>
    <property type="match status" value="1"/>
</dbReference>
<proteinExistence type="inferred from homology"/>
<reference key="1">
    <citation type="journal article" date="2008" name="DNA Res.">
        <title>Complete genome sequence and comparative analysis of the wild-type commensal Escherichia coli strain SE11 isolated from a healthy adult.</title>
        <authorList>
            <person name="Oshima K."/>
            <person name="Toh H."/>
            <person name="Ogura Y."/>
            <person name="Sasamoto H."/>
            <person name="Morita H."/>
            <person name="Park S.-H."/>
            <person name="Ooka T."/>
            <person name="Iyoda S."/>
            <person name="Taylor T.D."/>
            <person name="Hayashi T."/>
            <person name="Itoh K."/>
            <person name="Hattori M."/>
        </authorList>
    </citation>
    <scope>NUCLEOTIDE SEQUENCE [LARGE SCALE GENOMIC DNA]</scope>
    <source>
        <strain>SE11</strain>
    </source>
</reference>
<gene>
    <name evidence="1" type="primary">yciU</name>
    <name type="ordered locus">ECSE_1296</name>
</gene>
<evidence type="ECO:0000255" key="1">
    <source>
        <dbReference type="HAMAP-Rule" id="MF_00680"/>
    </source>
</evidence>
<comment type="function">
    <text evidence="1">May act as a double-stranded DNA (dsDNA) mimic. Probably regulates the activity of a dsDNA-binding protein.</text>
</comment>
<comment type="similarity">
    <text evidence="1">Belongs to the putative dsDNA mimic protein family.</text>
</comment>